<accession>B5QWL7</accession>
<name>YEAH_SALEP</name>
<comment type="similarity">
    <text evidence="1">Belongs to the UPF0229 family.</text>
</comment>
<evidence type="ECO:0000255" key="1">
    <source>
        <dbReference type="HAMAP-Rule" id="MF_01232"/>
    </source>
</evidence>
<evidence type="ECO:0000256" key="2">
    <source>
        <dbReference type="SAM" id="MobiDB-lite"/>
    </source>
</evidence>
<gene>
    <name evidence="1" type="primary">yeaH</name>
    <name type="ordered locus">SEN1768</name>
</gene>
<organism>
    <name type="scientific">Salmonella enteritidis PT4 (strain P125109)</name>
    <dbReference type="NCBI Taxonomy" id="550537"/>
    <lineage>
        <taxon>Bacteria</taxon>
        <taxon>Pseudomonadati</taxon>
        <taxon>Pseudomonadota</taxon>
        <taxon>Gammaproteobacteria</taxon>
        <taxon>Enterobacterales</taxon>
        <taxon>Enterobacteriaceae</taxon>
        <taxon>Salmonella</taxon>
    </lineage>
</organism>
<sequence>MTWFIDRRLNGKNKSTVNRQRFLRRYKAQIKQSISEAINKRSVTDVDSGESVSIPTDDISEPMFHQGRGGLRHRVHPGNDHFIQNDRIERPQGGGGGGSGSGQGQASQDGEGQDEFVFQISKDEYLDLLFEDLALPNLKKNQHRQLNEYKTHRAGFTSNGVPANISVVRSLQNSLARRTAMTAGKRRELHALETELETISHSEPAQLLEEERLRREIAELRAKIERVPFIDTFDLRYKNYEKRPEPSSQAVMFCLMDVSGSMDQATKDMAKRFYILLYLFLSRTYKNVEVVYIRHHTQAKEVDEHEFFYSQETGGTIVSSALKLMDEVVKERYDPGQWNIYAAQASDGDNWADDSPLCHEILAKKLLPVVRYYSYIEITRRAHQTLWREYEHLQATFDNFAMQHIRDQEDIYPVFRELFQKQSANQSV</sequence>
<protein>
    <recommendedName>
        <fullName evidence="1">UPF0229 protein YeaH</fullName>
    </recommendedName>
</protein>
<feature type="chain" id="PRO_1000139654" description="UPF0229 protein YeaH">
    <location>
        <begin position="1"/>
        <end position="428"/>
    </location>
</feature>
<feature type="region of interest" description="Disordered" evidence="2">
    <location>
        <begin position="78"/>
        <end position="111"/>
    </location>
</feature>
<feature type="compositionally biased region" description="Basic and acidic residues" evidence="2">
    <location>
        <begin position="78"/>
        <end position="90"/>
    </location>
</feature>
<feature type="compositionally biased region" description="Gly residues" evidence="2">
    <location>
        <begin position="92"/>
        <end position="103"/>
    </location>
</feature>
<dbReference type="EMBL" id="AM933172">
    <property type="protein sequence ID" value="CAR33349.1"/>
    <property type="molecule type" value="Genomic_DNA"/>
</dbReference>
<dbReference type="RefSeq" id="WP_000219715.1">
    <property type="nucleotide sequence ID" value="NC_011294.1"/>
</dbReference>
<dbReference type="SMR" id="B5QWL7"/>
<dbReference type="KEGG" id="set:SEN1768"/>
<dbReference type="HOGENOM" id="CLU_049702_0_0_6"/>
<dbReference type="Proteomes" id="UP000000613">
    <property type="component" value="Chromosome"/>
</dbReference>
<dbReference type="HAMAP" id="MF_01232">
    <property type="entry name" value="UPF0229"/>
    <property type="match status" value="1"/>
</dbReference>
<dbReference type="InterPro" id="IPR006698">
    <property type="entry name" value="UPF0229"/>
</dbReference>
<dbReference type="NCBIfam" id="NF003707">
    <property type="entry name" value="PRK05325.1-2"/>
    <property type="match status" value="1"/>
</dbReference>
<dbReference type="NCBIfam" id="NF003708">
    <property type="entry name" value="PRK05325.1-3"/>
    <property type="match status" value="1"/>
</dbReference>
<dbReference type="PANTHER" id="PTHR30510">
    <property type="entry name" value="UPF0229 PROTEIN YEAH"/>
    <property type="match status" value="1"/>
</dbReference>
<dbReference type="PANTHER" id="PTHR30510:SF2">
    <property type="entry name" value="UPF0229 PROTEIN YEAH"/>
    <property type="match status" value="1"/>
</dbReference>
<dbReference type="Pfam" id="PF04285">
    <property type="entry name" value="DUF444"/>
    <property type="match status" value="1"/>
</dbReference>
<proteinExistence type="inferred from homology"/>
<reference key="1">
    <citation type="journal article" date="2008" name="Genome Res.">
        <title>Comparative genome analysis of Salmonella enteritidis PT4 and Salmonella gallinarum 287/91 provides insights into evolutionary and host adaptation pathways.</title>
        <authorList>
            <person name="Thomson N.R."/>
            <person name="Clayton D.J."/>
            <person name="Windhorst D."/>
            <person name="Vernikos G."/>
            <person name="Davidson S."/>
            <person name="Churcher C."/>
            <person name="Quail M.A."/>
            <person name="Stevens M."/>
            <person name="Jones M.A."/>
            <person name="Watson M."/>
            <person name="Barron A."/>
            <person name="Layton A."/>
            <person name="Pickard D."/>
            <person name="Kingsley R.A."/>
            <person name="Bignell A."/>
            <person name="Clark L."/>
            <person name="Harris B."/>
            <person name="Ormond D."/>
            <person name="Abdellah Z."/>
            <person name="Brooks K."/>
            <person name="Cherevach I."/>
            <person name="Chillingworth T."/>
            <person name="Woodward J."/>
            <person name="Norberczak H."/>
            <person name="Lord A."/>
            <person name="Arrowsmith C."/>
            <person name="Jagels K."/>
            <person name="Moule S."/>
            <person name="Mungall K."/>
            <person name="Saunders M."/>
            <person name="Whitehead S."/>
            <person name="Chabalgoity J.A."/>
            <person name="Maskell D."/>
            <person name="Humphreys T."/>
            <person name="Roberts M."/>
            <person name="Barrow P.A."/>
            <person name="Dougan G."/>
            <person name="Parkhill J."/>
        </authorList>
    </citation>
    <scope>NUCLEOTIDE SEQUENCE [LARGE SCALE GENOMIC DNA]</scope>
    <source>
        <strain>P125109</strain>
    </source>
</reference>